<name>HFLD_YERPE</name>
<organism>
    <name type="scientific">Yersinia pestis</name>
    <dbReference type="NCBI Taxonomy" id="632"/>
    <lineage>
        <taxon>Bacteria</taxon>
        <taxon>Pseudomonadati</taxon>
        <taxon>Pseudomonadota</taxon>
        <taxon>Gammaproteobacteria</taxon>
        <taxon>Enterobacterales</taxon>
        <taxon>Yersiniaceae</taxon>
        <taxon>Yersinia</taxon>
    </lineage>
</organism>
<gene>
    <name evidence="1" type="primary">hflD</name>
    <name type="ordered locus">YPO1637</name>
    <name type="ordered locus">y1798</name>
    <name type="ordered locus">YP_1767</name>
</gene>
<accession>Q8ZFQ6</accession>
<accession>Q0WGE0</accession>
<accession>Q8D0Q1</accession>
<comment type="subcellular location">
    <subcellularLocation>
        <location>Cytoplasm</location>
    </subcellularLocation>
    <subcellularLocation>
        <location evidence="1">Cell inner membrane</location>
        <topology evidence="1">Peripheral membrane protein</topology>
        <orientation evidence="1">Cytoplasmic side</orientation>
    </subcellularLocation>
</comment>
<comment type="similarity">
    <text evidence="1">Belongs to the HflD family.</text>
</comment>
<comment type="sequence caution" evidence="2">
    <conflict type="erroneous initiation">
        <sequence resource="EMBL-CDS" id="AAM85366"/>
    </conflict>
</comment>
<dbReference type="EMBL" id="AL590842">
    <property type="protein sequence ID" value="CAL20282.1"/>
    <property type="molecule type" value="Genomic_DNA"/>
</dbReference>
<dbReference type="EMBL" id="AE009952">
    <property type="protein sequence ID" value="AAM85366.1"/>
    <property type="status" value="ALT_INIT"/>
    <property type="molecule type" value="Genomic_DNA"/>
</dbReference>
<dbReference type="EMBL" id="AE017042">
    <property type="protein sequence ID" value="AAS61994.1"/>
    <property type="molecule type" value="Genomic_DNA"/>
</dbReference>
<dbReference type="PIR" id="AH0199">
    <property type="entry name" value="AH0199"/>
</dbReference>
<dbReference type="RefSeq" id="WP_002210914.1">
    <property type="nucleotide sequence ID" value="NZ_WUCM01000020.1"/>
</dbReference>
<dbReference type="RefSeq" id="YP_002346648.1">
    <property type="nucleotide sequence ID" value="NC_003143.1"/>
</dbReference>
<dbReference type="SMR" id="Q8ZFQ6"/>
<dbReference type="STRING" id="214092.YPO1637"/>
<dbReference type="PaxDb" id="214092-YPO1637"/>
<dbReference type="DNASU" id="1146745"/>
<dbReference type="EnsemblBacteria" id="AAS61994">
    <property type="protein sequence ID" value="AAS61994"/>
    <property type="gene ID" value="YP_1767"/>
</dbReference>
<dbReference type="GeneID" id="57976936"/>
<dbReference type="KEGG" id="ype:YPO1637"/>
<dbReference type="KEGG" id="ypk:y1798"/>
<dbReference type="KEGG" id="ypm:YP_1767"/>
<dbReference type="PATRIC" id="fig|214092.21.peg.1982"/>
<dbReference type="eggNOG" id="COG2915">
    <property type="taxonomic scope" value="Bacteria"/>
</dbReference>
<dbReference type="HOGENOM" id="CLU_098920_0_0_6"/>
<dbReference type="OMA" id="RYIISLM"/>
<dbReference type="OrthoDB" id="9788031at2"/>
<dbReference type="Proteomes" id="UP000000815">
    <property type="component" value="Chromosome"/>
</dbReference>
<dbReference type="Proteomes" id="UP000001019">
    <property type="component" value="Chromosome"/>
</dbReference>
<dbReference type="Proteomes" id="UP000002490">
    <property type="component" value="Chromosome"/>
</dbReference>
<dbReference type="GO" id="GO:0005737">
    <property type="term" value="C:cytoplasm"/>
    <property type="evidence" value="ECO:0007669"/>
    <property type="project" value="UniProtKB-SubCell"/>
</dbReference>
<dbReference type="GO" id="GO:0005886">
    <property type="term" value="C:plasma membrane"/>
    <property type="evidence" value="ECO:0007669"/>
    <property type="project" value="UniProtKB-SubCell"/>
</dbReference>
<dbReference type="FunFam" id="1.10.3890.10:FF:000001">
    <property type="entry name" value="High frequency lysogenization protein HflD homolog"/>
    <property type="match status" value="1"/>
</dbReference>
<dbReference type="Gene3D" id="1.10.3890.10">
    <property type="entry name" value="HflD-like"/>
    <property type="match status" value="1"/>
</dbReference>
<dbReference type="HAMAP" id="MF_00695">
    <property type="entry name" value="HflD_protein"/>
    <property type="match status" value="1"/>
</dbReference>
<dbReference type="InterPro" id="IPR007451">
    <property type="entry name" value="HflD"/>
</dbReference>
<dbReference type="InterPro" id="IPR035932">
    <property type="entry name" value="HflD-like_sf"/>
</dbReference>
<dbReference type="NCBIfam" id="NF001246">
    <property type="entry name" value="PRK00218.1-2"/>
    <property type="match status" value="1"/>
</dbReference>
<dbReference type="NCBIfam" id="NF001248">
    <property type="entry name" value="PRK00218.1-4"/>
    <property type="match status" value="1"/>
</dbReference>
<dbReference type="NCBIfam" id="NF001249">
    <property type="entry name" value="PRK00218.1-5"/>
    <property type="match status" value="1"/>
</dbReference>
<dbReference type="PANTHER" id="PTHR38100">
    <property type="entry name" value="HIGH FREQUENCY LYSOGENIZATION PROTEIN HFLD"/>
    <property type="match status" value="1"/>
</dbReference>
<dbReference type="PANTHER" id="PTHR38100:SF1">
    <property type="entry name" value="HIGH FREQUENCY LYSOGENIZATION PROTEIN HFLD"/>
    <property type="match status" value="1"/>
</dbReference>
<dbReference type="Pfam" id="PF04356">
    <property type="entry name" value="DUF489"/>
    <property type="match status" value="1"/>
</dbReference>
<dbReference type="SUPFAM" id="SSF101322">
    <property type="entry name" value="YcfC-like"/>
    <property type="match status" value="1"/>
</dbReference>
<protein>
    <recommendedName>
        <fullName evidence="1">High frequency lysogenization protein HflD homolog</fullName>
    </recommendedName>
</protein>
<reference key="1">
    <citation type="journal article" date="2001" name="Nature">
        <title>Genome sequence of Yersinia pestis, the causative agent of plague.</title>
        <authorList>
            <person name="Parkhill J."/>
            <person name="Wren B.W."/>
            <person name="Thomson N.R."/>
            <person name="Titball R.W."/>
            <person name="Holden M.T.G."/>
            <person name="Prentice M.B."/>
            <person name="Sebaihia M."/>
            <person name="James K.D."/>
            <person name="Churcher C.M."/>
            <person name="Mungall K.L."/>
            <person name="Baker S."/>
            <person name="Basham D."/>
            <person name="Bentley S.D."/>
            <person name="Brooks K."/>
            <person name="Cerdeno-Tarraga A.-M."/>
            <person name="Chillingworth T."/>
            <person name="Cronin A."/>
            <person name="Davies R.M."/>
            <person name="Davis P."/>
            <person name="Dougan G."/>
            <person name="Feltwell T."/>
            <person name="Hamlin N."/>
            <person name="Holroyd S."/>
            <person name="Jagels K."/>
            <person name="Karlyshev A.V."/>
            <person name="Leather S."/>
            <person name="Moule S."/>
            <person name="Oyston P.C.F."/>
            <person name="Quail M.A."/>
            <person name="Rutherford K.M."/>
            <person name="Simmonds M."/>
            <person name="Skelton J."/>
            <person name="Stevens K."/>
            <person name="Whitehead S."/>
            <person name="Barrell B.G."/>
        </authorList>
    </citation>
    <scope>NUCLEOTIDE SEQUENCE [LARGE SCALE GENOMIC DNA]</scope>
    <source>
        <strain>CO-92 / Biovar Orientalis</strain>
    </source>
</reference>
<reference key="2">
    <citation type="journal article" date="2002" name="J. Bacteriol.">
        <title>Genome sequence of Yersinia pestis KIM.</title>
        <authorList>
            <person name="Deng W."/>
            <person name="Burland V."/>
            <person name="Plunkett G. III"/>
            <person name="Boutin A."/>
            <person name="Mayhew G.F."/>
            <person name="Liss P."/>
            <person name="Perna N.T."/>
            <person name="Rose D.J."/>
            <person name="Mau B."/>
            <person name="Zhou S."/>
            <person name="Schwartz D.C."/>
            <person name="Fetherston J.D."/>
            <person name="Lindler L.E."/>
            <person name="Brubaker R.R."/>
            <person name="Plano G.V."/>
            <person name="Straley S.C."/>
            <person name="McDonough K.A."/>
            <person name="Nilles M.L."/>
            <person name="Matson J.S."/>
            <person name="Blattner F.R."/>
            <person name="Perry R.D."/>
        </authorList>
    </citation>
    <scope>NUCLEOTIDE SEQUENCE [LARGE SCALE GENOMIC DNA]</scope>
    <source>
        <strain>KIM10+ / Biovar Mediaevalis</strain>
    </source>
</reference>
<reference key="3">
    <citation type="journal article" date="2004" name="DNA Res.">
        <title>Complete genome sequence of Yersinia pestis strain 91001, an isolate avirulent to humans.</title>
        <authorList>
            <person name="Song Y."/>
            <person name="Tong Z."/>
            <person name="Wang J."/>
            <person name="Wang L."/>
            <person name="Guo Z."/>
            <person name="Han Y."/>
            <person name="Zhang J."/>
            <person name="Pei D."/>
            <person name="Zhou D."/>
            <person name="Qin H."/>
            <person name="Pang X."/>
            <person name="Han Y."/>
            <person name="Zhai J."/>
            <person name="Li M."/>
            <person name="Cui B."/>
            <person name="Qi Z."/>
            <person name="Jin L."/>
            <person name="Dai R."/>
            <person name="Chen F."/>
            <person name="Li S."/>
            <person name="Ye C."/>
            <person name="Du Z."/>
            <person name="Lin W."/>
            <person name="Wang J."/>
            <person name="Yu J."/>
            <person name="Yang H."/>
            <person name="Wang J."/>
            <person name="Huang P."/>
            <person name="Yang R."/>
        </authorList>
    </citation>
    <scope>NUCLEOTIDE SEQUENCE [LARGE SCALE GENOMIC DNA]</scope>
    <source>
        <strain>91001 / Biovar Mediaevalis</strain>
    </source>
</reference>
<evidence type="ECO:0000255" key="1">
    <source>
        <dbReference type="HAMAP-Rule" id="MF_00695"/>
    </source>
</evidence>
<evidence type="ECO:0000305" key="2"/>
<keyword id="KW-0997">Cell inner membrane</keyword>
<keyword id="KW-1003">Cell membrane</keyword>
<keyword id="KW-0963">Cytoplasm</keyword>
<keyword id="KW-0472">Membrane</keyword>
<keyword id="KW-1185">Reference proteome</keyword>
<proteinExistence type="inferred from homology"/>
<sequence length="208" mass="22730">MAKNYYDITLALAGICQSARLVQQLAHEGQCDNDALNTVLRGLLQTNPSSTLAVYGDTEQVLKMGLETLQSVLNANRQGEAAELTRYTLSLMVLERKLSASKSAMNTLGERISQLDRQLAHFDLESETMMSSLASIYVDVVSPLGPRIQVTGSPAILQSPLVQAKVRATLLAGIRSAVLWQQVGGSRLQLMFSRNRLFKQAQSILAHT</sequence>
<feature type="chain" id="PRO_0000071598" description="High frequency lysogenization protein HflD homolog">
    <location>
        <begin position="1"/>
        <end position="208"/>
    </location>
</feature>
<feature type="sequence conflict" description="In Ref. 2." evidence="2" ref="2">
    <original>M</original>
    <variation>MIV</variation>
    <location>
        <position position="1"/>
    </location>
</feature>